<feature type="chain" id="PRO_0000255679" description="Small ribosomal subunit protein uS17">
    <location>
        <begin position="1"/>
        <end position="102"/>
    </location>
</feature>
<feature type="region of interest" description="Disordered" evidence="2">
    <location>
        <begin position="1"/>
        <end position="20"/>
    </location>
</feature>
<feature type="compositionally biased region" description="Polar residues" evidence="2">
    <location>
        <begin position="1"/>
        <end position="15"/>
    </location>
</feature>
<organism>
    <name type="scientific">Frankia casuarinae (strain DSM 45818 / CECT 9043 / HFP020203 / CcI3)</name>
    <dbReference type="NCBI Taxonomy" id="106370"/>
    <lineage>
        <taxon>Bacteria</taxon>
        <taxon>Bacillati</taxon>
        <taxon>Actinomycetota</taxon>
        <taxon>Actinomycetes</taxon>
        <taxon>Frankiales</taxon>
        <taxon>Frankiaceae</taxon>
        <taxon>Frankia</taxon>
    </lineage>
</organism>
<name>RS17_FRACC</name>
<proteinExistence type="inferred from homology"/>
<comment type="function">
    <text evidence="1">One of the primary rRNA binding proteins, it binds specifically to the 5'-end of 16S ribosomal RNA.</text>
</comment>
<comment type="subunit">
    <text evidence="1">Part of the 30S ribosomal subunit.</text>
</comment>
<comment type="similarity">
    <text evidence="1">Belongs to the universal ribosomal protein uS17 family.</text>
</comment>
<accession>Q2JFG7</accession>
<gene>
    <name evidence="1" type="primary">rpsQ</name>
    <name type="ordered locus">Francci3_0591</name>
</gene>
<protein>
    <recommendedName>
        <fullName evidence="1">Small ribosomal subunit protein uS17</fullName>
    </recommendedName>
    <alternativeName>
        <fullName evidence="3">30S ribosomal protein S17</fullName>
    </alternativeName>
</protein>
<reference key="1">
    <citation type="journal article" date="2007" name="Genome Res.">
        <title>Genome characteristics of facultatively symbiotic Frankia sp. strains reflect host range and host plant biogeography.</title>
        <authorList>
            <person name="Normand P."/>
            <person name="Lapierre P."/>
            <person name="Tisa L.S."/>
            <person name="Gogarten J.P."/>
            <person name="Alloisio N."/>
            <person name="Bagnarol E."/>
            <person name="Bassi C.A."/>
            <person name="Berry A.M."/>
            <person name="Bickhart D.M."/>
            <person name="Choisne N."/>
            <person name="Couloux A."/>
            <person name="Cournoyer B."/>
            <person name="Cruveiller S."/>
            <person name="Daubin V."/>
            <person name="Demange N."/>
            <person name="Francino M.P."/>
            <person name="Goltsman E."/>
            <person name="Huang Y."/>
            <person name="Kopp O.R."/>
            <person name="Labarre L."/>
            <person name="Lapidus A."/>
            <person name="Lavire C."/>
            <person name="Marechal J."/>
            <person name="Martinez M."/>
            <person name="Mastronunzio J.E."/>
            <person name="Mullin B.C."/>
            <person name="Niemann J."/>
            <person name="Pujic P."/>
            <person name="Rawnsley T."/>
            <person name="Rouy Z."/>
            <person name="Schenowitz C."/>
            <person name="Sellstedt A."/>
            <person name="Tavares F."/>
            <person name="Tomkins J.P."/>
            <person name="Vallenet D."/>
            <person name="Valverde C."/>
            <person name="Wall L.G."/>
            <person name="Wang Y."/>
            <person name="Medigue C."/>
            <person name="Benson D.R."/>
        </authorList>
    </citation>
    <scope>NUCLEOTIDE SEQUENCE [LARGE SCALE GENOMIC DNA]</scope>
    <source>
        <strain>DSM 45818 / CECT 9043 / HFP020203 / CcI3</strain>
    </source>
</reference>
<sequence>MTDETASQEASQSTDAAAPARGFRKVREGLVVSDKMTKTVVVAVEDRVQHPLYGKTIRRTKKVKAHDESGTTGVGDRVLLMETRPLSATKRWRIVQVLEKAK</sequence>
<evidence type="ECO:0000255" key="1">
    <source>
        <dbReference type="HAMAP-Rule" id="MF_01345"/>
    </source>
</evidence>
<evidence type="ECO:0000256" key="2">
    <source>
        <dbReference type="SAM" id="MobiDB-lite"/>
    </source>
</evidence>
<evidence type="ECO:0000305" key="3"/>
<keyword id="KW-1185">Reference proteome</keyword>
<keyword id="KW-0687">Ribonucleoprotein</keyword>
<keyword id="KW-0689">Ribosomal protein</keyword>
<keyword id="KW-0694">RNA-binding</keyword>
<keyword id="KW-0699">rRNA-binding</keyword>
<dbReference type="EMBL" id="CP000249">
    <property type="protein sequence ID" value="ABD09975.1"/>
    <property type="molecule type" value="Genomic_DNA"/>
</dbReference>
<dbReference type="RefSeq" id="WP_011435047.1">
    <property type="nucleotide sequence ID" value="NZ_JENI01000019.1"/>
</dbReference>
<dbReference type="SMR" id="Q2JFG7"/>
<dbReference type="STRING" id="106370.Francci3_0591"/>
<dbReference type="KEGG" id="fra:Francci3_0591"/>
<dbReference type="eggNOG" id="COG0186">
    <property type="taxonomic scope" value="Bacteria"/>
</dbReference>
<dbReference type="HOGENOM" id="CLU_073626_1_0_11"/>
<dbReference type="PhylomeDB" id="Q2JFG7"/>
<dbReference type="Proteomes" id="UP000001937">
    <property type="component" value="Chromosome"/>
</dbReference>
<dbReference type="GO" id="GO:0022627">
    <property type="term" value="C:cytosolic small ribosomal subunit"/>
    <property type="evidence" value="ECO:0007669"/>
    <property type="project" value="TreeGrafter"/>
</dbReference>
<dbReference type="GO" id="GO:0019843">
    <property type="term" value="F:rRNA binding"/>
    <property type="evidence" value="ECO:0007669"/>
    <property type="project" value="UniProtKB-UniRule"/>
</dbReference>
<dbReference type="GO" id="GO:0003735">
    <property type="term" value="F:structural constituent of ribosome"/>
    <property type="evidence" value="ECO:0007669"/>
    <property type="project" value="InterPro"/>
</dbReference>
<dbReference type="GO" id="GO:0006412">
    <property type="term" value="P:translation"/>
    <property type="evidence" value="ECO:0007669"/>
    <property type="project" value="UniProtKB-UniRule"/>
</dbReference>
<dbReference type="CDD" id="cd00364">
    <property type="entry name" value="Ribosomal_uS17"/>
    <property type="match status" value="1"/>
</dbReference>
<dbReference type="Gene3D" id="2.40.50.140">
    <property type="entry name" value="Nucleic acid-binding proteins"/>
    <property type="match status" value="1"/>
</dbReference>
<dbReference type="HAMAP" id="MF_01345_B">
    <property type="entry name" value="Ribosomal_uS17_B"/>
    <property type="match status" value="1"/>
</dbReference>
<dbReference type="InterPro" id="IPR012340">
    <property type="entry name" value="NA-bd_OB-fold"/>
</dbReference>
<dbReference type="InterPro" id="IPR000266">
    <property type="entry name" value="Ribosomal_uS17"/>
</dbReference>
<dbReference type="InterPro" id="IPR019984">
    <property type="entry name" value="Ribosomal_uS17_bact/chlr"/>
</dbReference>
<dbReference type="InterPro" id="IPR019979">
    <property type="entry name" value="Ribosomal_uS17_CS"/>
</dbReference>
<dbReference type="NCBIfam" id="NF004123">
    <property type="entry name" value="PRK05610.1"/>
    <property type="match status" value="1"/>
</dbReference>
<dbReference type="NCBIfam" id="TIGR03635">
    <property type="entry name" value="uS17_bact"/>
    <property type="match status" value="1"/>
</dbReference>
<dbReference type="PANTHER" id="PTHR10744">
    <property type="entry name" value="40S RIBOSOMAL PROTEIN S11 FAMILY MEMBER"/>
    <property type="match status" value="1"/>
</dbReference>
<dbReference type="PANTHER" id="PTHR10744:SF1">
    <property type="entry name" value="SMALL RIBOSOMAL SUBUNIT PROTEIN US17M"/>
    <property type="match status" value="1"/>
</dbReference>
<dbReference type="Pfam" id="PF00366">
    <property type="entry name" value="Ribosomal_S17"/>
    <property type="match status" value="1"/>
</dbReference>
<dbReference type="PRINTS" id="PR00973">
    <property type="entry name" value="RIBOSOMALS17"/>
</dbReference>
<dbReference type="SUPFAM" id="SSF50249">
    <property type="entry name" value="Nucleic acid-binding proteins"/>
    <property type="match status" value="1"/>
</dbReference>
<dbReference type="PROSITE" id="PS00056">
    <property type="entry name" value="RIBOSOMAL_S17"/>
    <property type="match status" value="1"/>
</dbReference>